<name>ALDOB_RAT</name>
<feature type="initiator methionine" description="Removed" evidence="3">
    <location>
        <position position="1"/>
    </location>
</feature>
<feature type="chain" id="PRO_0000216943" description="Fructose-bisphosphate aldolase B">
    <location>
        <begin position="2"/>
        <end position="364"/>
    </location>
</feature>
<feature type="active site" description="Proton acceptor" evidence="1">
    <location>
        <position position="188"/>
    </location>
</feature>
<feature type="active site" description="Schiff-base intermediate with dihydroxyacetone-P" evidence="1">
    <location>
        <position position="230"/>
    </location>
</feature>
<feature type="binding site" evidence="1">
    <location>
        <position position="43"/>
    </location>
    <ligand>
        <name>beta-D-fructose 1,6-bisphosphate</name>
        <dbReference type="ChEBI" id="CHEBI:32966"/>
    </ligand>
</feature>
<feature type="binding site" evidence="1">
    <location>
        <begin position="272"/>
        <end position="274"/>
    </location>
    <ligand>
        <name>beta-D-fructose 1,6-bisphosphate</name>
        <dbReference type="ChEBI" id="CHEBI:32966"/>
    </ligand>
</feature>
<feature type="binding site" evidence="1">
    <location>
        <position position="304"/>
    </location>
    <ligand>
        <name>beta-D-fructose 1,6-bisphosphate</name>
        <dbReference type="ChEBI" id="CHEBI:32966"/>
    </ligand>
</feature>
<feature type="site" description="Necessary for preference for fructose 1,6-bisphosphate over fructose 1-phosphate" evidence="1">
    <location>
        <position position="364"/>
    </location>
</feature>
<feature type="modified residue" description="N-acetylalanine" evidence="3">
    <location>
        <position position="2"/>
    </location>
</feature>
<feature type="modified residue" description="N6-succinyllysine" evidence="3">
    <location>
        <position position="13"/>
    </location>
</feature>
<feature type="modified residue" description="Phosphoserine" evidence="5">
    <location>
        <position position="36"/>
    </location>
</feature>
<feature type="modified residue" description="Phosphothreonine" evidence="5">
    <location>
        <position position="39"/>
    </location>
</feature>
<feature type="modified residue" description="Phosphoserine" evidence="2">
    <location>
        <position position="89"/>
    </location>
</feature>
<feature type="modified residue" description="Phosphothreonine" evidence="2">
    <location>
        <position position="119"/>
    </location>
</feature>
<feature type="modified residue" description="N6-succinyllysine" evidence="3">
    <location>
        <position position="121"/>
    </location>
</feature>
<feature type="modified residue" description="Phosphoserine" evidence="5">
    <location>
        <position position="132"/>
    </location>
</feature>
<feature type="modified residue" description="Phosphoserine" evidence="2">
    <location>
        <position position="272"/>
    </location>
</feature>
<feature type="modified residue" description="Phosphoserine" evidence="2">
    <location>
        <position position="276"/>
    </location>
</feature>
<feature type="modified residue" description="Phosphoserine" evidence="5">
    <location>
        <position position="299"/>
    </location>
</feature>
<feature type="modified residue" description="Phosphoserine" evidence="5">
    <location>
        <position position="301"/>
    </location>
</feature>
<feature type="modified residue" description="Phosphoserine" evidence="2">
    <location>
        <position position="309"/>
    </location>
</feature>
<feature type="modified residue" description="N6-succinyllysine" evidence="3">
    <location>
        <position position="317"/>
    </location>
</feature>
<feature type="sequence conflict" description="In Ref. 2; CAA26156." evidence="4" ref="2">
    <original>L</original>
    <variation>V</variation>
    <location>
        <position position="234"/>
    </location>
</feature>
<comment type="function">
    <text evidence="2">Catalyzes the aldol cleavage of fructose 1,6-biphosphate to form two triosephosphates dihydroxyacetone phosphate and D-glyceraldehyde 3-phosphate in glycolysis as well as the reverse stereospecific aldol addition reaction in gluconeogenesis. In fructolysis, metabolizes fructose 1-phosphate derived from the phosphorylation of dietary fructose by fructokinase into dihydroxyacetone phosphate and D-glyceraldehyde (By similarity). Acts as an adapter independently of its enzymatic activity, exerts a tumor suppressor role by stabilizing the ternary complex with G6PD and TP53 to inhibit G6PD activity and keep oxidative pentose phosphate metabolism in check (By similarity).</text>
</comment>
<comment type="catalytic activity">
    <reaction evidence="2">
        <text>beta-D-fructose 1,6-bisphosphate = D-glyceraldehyde 3-phosphate + dihydroxyacetone phosphate</text>
        <dbReference type="Rhea" id="RHEA:14729"/>
        <dbReference type="ChEBI" id="CHEBI:32966"/>
        <dbReference type="ChEBI" id="CHEBI:57642"/>
        <dbReference type="ChEBI" id="CHEBI:59776"/>
        <dbReference type="EC" id="4.1.2.13"/>
    </reaction>
    <physiologicalReaction direction="left-to-right" evidence="2">
        <dbReference type="Rhea" id="RHEA:14730"/>
    </physiologicalReaction>
    <physiologicalReaction direction="right-to-left" evidence="2">
        <dbReference type="Rhea" id="RHEA:14731"/>
    </physiologicalReaction>
</comment>
<comment type="catalytic activity">
    <reaction evidence="2">
        <text>beta-D-fructose 1-phosphate = D-glyceraldehyde + dihydroxyacetone phosphate</text>
        <dbReference type="Rhea" id="RHEA:30851"/>
        <dbReference type="ChEBI" id="CHEBI:17378"/>
        <dbReference type="ChEBI" id="CHEBI:57642"/>
        <dbReference type="ChEBI" id="CHEBI:138881"/>
    </reaction>
    <physiologicalReaction direction="left-to-right" evidence="2">
        <dbReference type="Rhea" id="RHEA:30852"/>
    </physiologicalReaction>
    <physiologicalReaction direction="right-to-left" evidence="2">
        <dbReference type="Rhea" id="RHEA:30853"/>
    </physiologicalReaction>
</comment>
<comment type="pathway">
    <text evidence="2">Carbohydrate degradation; glycolysis; D-glyceraldehyde 3-phosphate and glycerone phosphate from D-glucose: step 4/4.</text>
</comment>
<comment type="pathway">
    <text evidence="2">Carbohydrate biosynthesis; gluconeogenesis.</text>
</comment>
<comment type="pathway">
    <text evidence="2">Carbohydrate metabolism; fructose metabolism.</text>
</comment>
<comment type="subunit">
    <text evidence="2">Homotetramer. Interacts with BBS1, BBS2, BBS4 and BBS7. Forms a ternary complex with G6PD and TP53; this interaction is direct.</text>
</comment>
<comment type="subcellular location">
    <subcellularLocation>
        <location evidence="2">Cytoplasm</location>
        <location evidence="2">Cytosol</location>
    </subcellularLocation>
    <subcellularLocation>
        <location evidence="2">Cytoplasm</location>
        <location evidence="2">Cytoskeleton</location>
        <location evidence="2">Microtubule organizing center</location>
        <location evidence="2">Centrosome</location>
        <location evidence="2">Centriolar satellite</location>
    </subcellularLocation>
</comment>
<comment type="miscellaneous">
    <text>In vertebrates, 3 forms of this ubiquitous glycolytic enzyme are found, aldolase A in muscle, aldolase B in liver and aldolase C in brain.</text>
</comment>
<comment type="similarity">
    <text evidence="4">Belongs to the class I fructose-bisphosphate aldolase family.</text>
</comment>
<organism>
    <name type="scientific">Rattus norvegicus</name>
    <name type="common">Rat</name>
    <dbReference type="NCBI Taxonomy" id="10116"/>
    <lineage>
        <taxon>Eukaryota</taxon>
        <taxon>Metazoa</taxon>
        <taxon>Chordata</taxon>
        <taxon>Craniata</taxon>
        <taxon>Vertebrata</taxon>
        <taxon>Euteleostomi</taxon>
        <taxon>Mammalia</taxon>
        <taxon>Eutheria</taxon>
        <taxon>Euarchontoglires</taxon>
        <taxon>Glires</taxon>
        <taxon>Rodentia</taxon>
        <taxon>Myomorpha</taxon>
        <taxon>Muroidea</taxon>
        <taxon>Muridae</taxon>
        <taxon>Murinae</taxon>
        <taxon>Rattus</taxon>
    </lineage>
</organism>
<dbReference type="EC" id="4.1.2.13" evidence="2"/>
<dbReference type="EMBL" id="M10149">
    <property type="protein sequence ID" value="AAA40716.1"/>
    <property type="molecule type" value="mRNA"/>
</dbReference>
<dbReference type="EMBL" id="X02284">
    <property type="protein sequence ID" value="CAA26156.1"/>
    <property type="molecule type" value="Genomic_DNA"/>
</dbReference>
<dbReference type="EMBL" id="X02285">
    <property type="protein sequence ID" value="CAA26156.1"/>
    <property type="status" value="JOINED"/>
    <property type="molecule type" value="Genomic_DNA"/>
</dbReference>
<dbReference type="EMBL" id="X02286">
    <property type="protein sequence ID" value="CAA26156.1"/>
    <property type="status" value="JOINED"/>
    <property type="molecule type" value="Genomic_DNA"/>
</dbReference>
<dbReference type="EMBL" id="X02287">
    <property type="protein sequence ID" value="CAA26156.1"/>
    <property type="status" value="JOINED"/>
    <property type="molecule type" value="Genomic_DNA"/>
</dbReference>
<dbReference type="EMBL" id="X02288">
    <property type="protein sequence ID" value="CAA26156.1"/>
    <property type="status" value="JOINED"/>
    <property type="molecule type" value="Genomic_DNA"/>
</dbReference>
<dbReference type="EMBL" id="X02289">
    <property type="protein sequence ID" value="CAA26156.1"/>
    <property type="status" value="JOINED"/>
    <property type="molecule type" value="Genomic_DNA"/>
</dbReference>
<dbReference type="EMBL" id="X02290">
    <property type="protein sequence ID" value="CAA26156.1"/>
    <property type="status" value="JOINED"/>
    <property type="molecule type" value="Genomic_DNA"/>
</dbReference>
<dbReference type="EMBL" id="X02291">
    <property type="protein sequence ID" value="CAA26156.1"/>
    <property type="status" value="JOINED"/>
    <property type="molecule type" value="Genomic_DNA"/>
</dbReference>
<dbReference type="EMBL" id="V01223">
    <property type="protein sequence ID" value="CAA24533.1"/>
    <property type="molecule type" value="mRNA"/>
</dbReference>
<dbReference type="PIR" id="A22585">
    <property type="entry name" value="ADRTB"/>
</dbReference>
<dbReference type="SMR" id="P00884"/>
<dbReference type="FunCoup" id="P00884">
    <property type="interactions" value="831"/>
</dbReference>
<dbReference type="IntAct" id="P00884">
    <property type="interactions" value="1"/>
</dbReference>
<dbReference type="MINT" id="P00884"/>
<dbReference type="STRING" id="10116.ENSRNOP00000009111"/>
<dbReference type="iPTMnet" id="P00884"/>
<dbReference type="PhosphoSitePlus" id="P00884"/>
<dbReference type="jPOST" id="P00884"/>
<dbReference type="PaxDb" id="10116-ENSRNOP00000009111"/>
<dbReference type="UCSC" id="RGD:2090">
    <property type="organism name" value="rat"/>
</dbReference>
<dbReference type="AGR" id="RGD:2090"/>
<dbReference type="RGD" id="2090">
    <property type="gene designation" value="Aldob"/>
</dbReference>
<dbReference type="eggNOG" id="KOG1557">
    <property type="taxonomic scope" value="Eukaryota"/>
</dbReference>
<dbReference type="InParanoid" id="P00884"/>
<dbReference type="PhylomeDB" id="P00884"/>
<dbReference type="BRENDA" id="4.1.2.13">
    <property type="organism ID" value="5301"/>
</dbReference>
<dbReference type="Reactome" id="R-RNO-70171">
    <property type="pathway name" value="Glycolysis"/>
</dbReference>
<dbReference type="Reactome" id="R-RNO-70263">
    <property type="pathway name" value="Gluconeogenesis"/>
</dbReference>
<dbReference type="Reactome" id="R-RNO-70350">
    <property type="pathway name" value="Fructose catabolism"/>
</dbReference>
<dbReference type="SABIO-RK" id="P00884"/>
<dbReference type="UniPathway" id="UPA00109">
    <property type="reaction ID" value="UER00183"/>
</dbReference>
<dbReference type="UniPathway" id="UPA00138"/>
<dbReference type="UniPathway" id="UPA00202"/>
<dbReference type="PRO" id="PR:P00884"/>
<dbReference type="Proteomes" id="UP000002494">
    <property type="component" value="Unplaced"/>
</dbReference>
<dbReference type="GO" id="GO:0034451">
    <property type="term" value="C:centriolar satellite"/>
    <property type="evidence" value="ECO:0000266"/>
    <property type="project" value="RGD"/>
</dbReference>
<dbReference type="GO" id="GO:0005829">
    <property type="term" value="C:cytosol"/>
    <property type="evidence" value="ECO:0000266"/>
    <property type="project" value="RGD"/>
</dbReference>
<dbReference type="GO" id="GO:0005815">
    <property type="term" value="C:microtubule organizing center"/>
    <property type="evidence" value="ECO:0000266"/>
    <property type="project" value="RGD"/>
</dbReference>
<dbReference type="GO" id="GO:0048471">
    <property type="term" value="C:perinuclear region of cytoplasm"/>
    <property type="evidence" value="ECO:0000314"/>
    <property type="project" value="RGD"/>
</dbReference>
<dbReference type="GO" id="GO:0030867">
    <property type="term" value="C:rough endoplasmic reticulum membrane"/>
    <property type="evidence" value="ECO:0000314"/>
    <property type="project" value="RGD"/>
</dbReference>
<dbReference type="GO" id="GO:0030868">
    <property type="term" value="C:smooth endoplasmic reticulum membrane"/>
    <property type="evidence" value="ECO:0000314"/>
    <property type="project" value="RGD"/>
</dbReference>
<dbReference type="GO" id="GO:0051117">
    <property type="term" value="F:ATPase binding"/>
    <property type="evidence" value="ECO:0000266"/>
    <property type="project" value="RGD"/>
</dbReference>
<dbReference type="GO" id="GO:0008092">
    <property type="term" value="F:cytoskeletal protein binding"/>
    <property type="evidence" value="ECO:0000266"/>
    <property type="project" value="RGD"/>
</dbReference>
<dbReference type="GO" id="GO:0070061">
    <property type="term" value="F:fructose binding"/>
    <property type="evidence" value="ECO:0000266"/>
    <property type="project" value="RGD"/>
</dbReference>
<dbReference type="GO" id="GO:0061609">
    <property type="term" value="F:fructose-1-phosphate aldolase activity"/>
    <property type="evidence" value="ECO:0000250"/>
    <property type="project" value="UniProtKB"/>
</dbReference>
<dbReference type="GO" id="GO:0004332">
    <property type="term" value="F:fructose-bisphosphate aldolase activity"/>
    <property type="evidence" value="ECO:0000314"/>
    <property type="project" value="RGD"/>
</dbReference>
<dbReference type="GO" id="GO:0042802">
    <property type="term" value="F:identical protein binding"/>
    <property type="evidence" value="ECO:0000266"/>
    <property type="project" value="RGD"/>
</dbReference>
<dbReference type="GO" id="GO:0060090">
    <property type="term" value="F:molecular adaptor activity"/>
    <property type="evidence" value="ECO:0000266"/>
    <property type="project" value="RGD"/>
</dbReference>
<dbReference type="GO" id="GO:0031210">
    <property type="term" value="F:phosphatidylcholine binding"/>
    <property type="evidence" value="ECO:0000353"/>
    <property type="project" value="RGD"/>
</dbReference>
<dbReference type="GO" id="GO:0032869">
    <property type="term" value="P:cellular response to insulin stimulus"/>
    <property type="evidence" value="ECO:0000270"/>
    <property type="project" value="RGD"/>
</dbReference>
<dbReference type="GO" id="GO:0030388">
    <property type="term" value="P:fructose 1,6-bisphosphate metabolic process"/>
    <property type="evidence" value="ECO:0000266"/>
    <property type="project" value="RGD"/>
</dbReference>
<dbReference type="GO" id="GO:0006001">
    <property type="term" value="P:fructose catabolic process"/>
    <property type="evidence" value="ECO:0000266"/>
    <property type="project" value="RGD"/>
</dbReference>
<dbReference type="GO" id="GO:0061624">
    <property type="term" value="P:fructose catabolic process to hydroxyacetone phosphate and glyceraldehyde-3-phosphate"/>
    <property type="evidence" value="ECO:0000266"/>
    <property type="project" value="RGD"/>
</dbReference>
<dbReference type="GO" id="GO:0006000">
    <property type="term" value="P:fructose metabolic process"/>
    <property type="evidence" value="ECO:0000266"/>
    <property type="project" value="RGD"/>
</dbReference>
<dbReference type="GO" id="GO:0006094">
    <property type="term" value="P:gluconeogenesis"/>
    <property type="evidence" value="ECO:0007669"/>
    <property type="project" value="UniProtKB-UniPathway"/>
</dbReference>
<dbReference type="GO" id="GO:0006096">
    <property type="term" value="P:glycolytic process"/>
    <property type="evidence" value="ECO:0000250"/>
    <property type="project" value="UniProtKB"/>
</dbReference>
<dbReference type="GO" id="GO:0001889">
    <property type="term" value="P:liver development"/>
    <property type="evidence" value="ECO:0000270"/>
    <property type="project" value="RGD"/>
</dbReference>
<dbReference type="GO" id="GO:1905856">
    <property type="term" value="P:negative regulation of pentose-phosphate shunt"/>
    <property type="evidence" value="ECO:0000266"/>
    <property type="project" value="RGD"/>
</dbReference>
<dbReference type="GO" id="GO:0043200">
    <property type="term" value="P:response to amino acid"/>
    <property type="evidence" value="ECO:0000270"/>
    <property type="project" value="RGD"/>
</dbReference>
<dbReference type="GO" id="GO:0051591">
    <property type="term" value="P:response to cAMP"/>
    <property type="evidence" value="ECO:0000270"/>
    <property type="project" value="RGD"/>
</dbReference>
<dbReference type="GO" id="GO:0009743">
    <property type="term" value="P:response to carbohydrate"/>
    <property type="evidence" value="ECO:0000270"/>
    <property type="project" value="RGD"/>
</dbReference>
<dbReference type="GO" id="GO:0046688">
    <property type="term" value="P:response to copper ion"/>
    <property type="evidence" value="ECO:0000270"/>
    <property type="project" value="RGD"/>
</dbReference>
<dbReference type="GO" id="GO:0009750">
    <property type="term" value="P:response to fructose"/>
    <property type="evidence" value="ECO:0000270"/>
    <property type="project" value="RGD"/>
</dbReference>
<dbReference type="GO" id="GO:0051384">
    <property type="term" value="P:response to glucocorticoid"/>
    <property type="evidence" value="ECO:0000270"/>
    <property type="project" value="RGD"/>
</dbReference>
<dbReference type="GO" id="GO:0070741">
    <property type="term" value="P:response to interleukin-6"/>
    <property type="evidence" value="ECO:0000270"/>
    <property type="project" value="RGD"/>
</dbReference>
<dbReference type="GO" id="GO:0043434">
    <property type="term" value="P:response to peptide hormone"/>
    <property type="evidence" value="ECO:0000314"/>
    <property type="project" value="RGD"/>
</dbReference>
<dbReference type="GO" id="GO:0042594">
    <property type="term" value="P:response to starvation"/>
    <property type="evidence" value="ECO:0000270"/>
    <property type="project" value="RGD"/>
</dbReference>
<dbReference type="GO" id="GO:0009410">
    <property type="term" value="P:response to xenobiotic stimulus"/>
    <property type="evidence" value="ECO:0000270"/>
    <property type="project" value="RGD"/>
</dbReference>
<dbReference type="GO" id="GO:0010043">
    <property type="term" value="P:response to zinc ion"/>
    <property type="evidence" value="ECO:0000314"/>
    <property type="project" value="RGD"/>
</dbReference>
<dbReference type="GO" id="GO:0070072">
    <property type="term" value="P:vacuolar proton-transporting V-type ATPase complex assembly"/>
    <property type="evidence" value="ECO:0000266"/>
    <property type="project" value="RGD"/>
</dbReference>
<dbReference type="CDD" id="cd00948">
    <property type="entry name" value="FBP_aldolase_I_a"/>
    <property type="match status" value="1"/>
</dbReference>
<dbReference type="FunFam" id="3.20.20.70:FF:000021">
    <property type="entry name" value="Fructose-bisphosphate aldolase"/>
    <property type="match status" value="1"/>
</dbReference>
<dbReference type="Gene3D" id="3.20.20.70">
    <property type="entry name" value="Aldolase class I"/>
    <property type="match status" value="1"/>
</dbReference>
<dbReference type="InterPro" id="IPR029768">
    <property type="entry name" value="Aldolase_I_AS"/>
</dbReference>
<dbReference type="InterPro" id="IPR013785">
    <property type="entry name" value="Aldolase_TIM"/>
</dbReference>
<dbReference type="InterPro" id="IPR000741">
    <property type="entry name" value="FBA_I"/>
</dbReference>
<dbReference type="NCBIfam" id="NF033379">
    <property type="entry name" value="FrucBisAld_I"/>
    <property type="match status" value="1"/>
</dbReference>
<dbReference type="PANTHER" id="PTHR11627">
    <property type="entry name" value="FRUCTOSE-BISPHOSPHATE ALDOLASE"/>
    <property type="match status" value="1"/>
</dbReference>
<dbReference type="Pfam" id="PF00274">
    <property type="entry name" value="Glycolytic"/>
    <property type="match status" value="1"/>
</dbReference>
<dbReference type="SUPFAM" id="SSF51569">
    <property type="entry name" value="Aldolase"/>
    <property type="match status" value="1"/>
</dbReference>
<dbReference type="PROSITE" id="PS00158">
    <property type="entry name" value="ALDOLASE_CLASS_I"/>
    <property type="match status" value="1"/>
</dbReference>
<accession>P00884</accession>
<accession>P70706</accession>
<sequence length="364" mass="39618">MAHRFPALTSEQKKELSEIAQRIVANGKGILAADESVGTMGNRLQRIKVENTEENRRQFRELLFSVDNSISQSIGGVILFHETLYQKDSQGKLFRNILKEKGIVVGIKLDQGGAPLAGTNKETTIQGLDGLSERCAQYKKDGVDFGKWRAVLRISDQCPSSLAIQENANALARYASICQQNGLVPIVEPEVLPDGDHDLEHCQYVSEKVLAAVYKALNDHHVYLEGTLLKPNMLTAGHACTKKYTPEQVAMATVTALHRTVPAAVPSICFLSGGMSEEDATLNLNAIYRCPLPRPWKLSFSYGRALQASALAAWGGKAANKKATQEAFMKRAVANCQAAQGQYVHTGSSGAASTQSLFTASYTY</sequence>
<protein>
    <recommendedName>
        <fullName>Fructose-bisphosphate aldolase B</fullName>
        <ecNumber evidence="2">4.1.2.13</ecNumber>
    </recommendedName>
    <alternativeName>
        <fullName>Liver-type aldolase</fullName>
    </alternativeName>
</protein>
<reference key="1">
    <citation type="journal article" date="1984" name="J. Biol. Chem.">
        <title>Nucleotide sequence of rat liver aldolase B messenger RNA.</title>
        <authorList>
            <person name="Tsutsumi K."/>
            <person name="Mukai T."/>
            <person name="Tsutsumi R."/>
            <person name="Mori M."/>
            <person name="Daimon M."/>
            <person name="Tanaka T."/>
            <person name="Yatsuki H."/>
            <person name="Hori K."/>
            <person name="Ishikawa K."/>
        </authorList>
    </citation>
    <scope>NUCLEOTIDE SEQUENCE [MRNA]</scope>
</reference>
<reference key="2">
    <citation type="journal article" date="1985" name="J. Mol. Biol.">
        <title>Structure and genomic organization of the rat aldolase B gene.</title>
        <authorList>
            <person name="Tsutsumi K."/>
            <person name="Mukai T."/>
            <person name="Tsutsumi R."/>
            <person name="Hidaka S."/>
            <person name="Arai Y."/>
            <person name="Hori K."/>
            <person name="Ishikawa K."/>
        </authorList>
    </citation>
    <scope>NUCLEOTIDE SEQUENCE [GENOMIC DNA]</scope>
    <source>
        <strain>Sprague-Dawley</strain>
    </source>
</reference>
<reference key="3">
    <citation type="journal article" date="1983" name="J. Biol. Chem.">
        <title>Rat aldolase isozyme gene.</title>
        <authorList>
            <person name="Tsutsumi K."/>
            <person name="Mukai T."/>
            <person name="Hidaka S."/>
            <person name="Miyahara H."/>
            <person name="Tsutsumi R."/>
            <person name="Tanaka T."/>
            <person name="Hori K."/>
            <person name="Ishikawa K."/>
        </authorList>
    </citation>
    <scope>NUCLEOTIDE SEQUENCE OF 185-364</scope>
</reference>
<reference key="4">
    <citation type="journal article" date="1991" name="J. Biol. Chem.">
        <title>Key enzymes of carbohydrate metabolism as targets of the 11.5-kDa Zn(2+)-binding protein (parathymosin).</title>
        <authorList>
            <person name="Brand I.A."/>
            <person name="Heinickel A."/>
        </authorList>
    </citation>
    <scope>PROTEIN SEQUENCE OF 41-68</scope>
</reference>
<reference key="5">
    <citation type="journal article" date="2012" name="Nat. Commun.">
        <title>Quantitative maps of protein phosphorylation sites across 14 different rat organs and tissues.</title>
        <authorList>
            <person name="Lundby A."/>
            <person name="Secher A."/>
            <person name="Lage K."/>
            <person name="Nordsborg N.B."/>
            <person name="Dmytriyev A."/>
            <person name="Lundby C."/>
            <person name="Olsen J.V."/>
        </authorList>
    </citation>
    <scope>PHOSPHORYLATION [LARGE SCALE ANALYSIS] AT SER-36; THR-39; SER-132; SER-299 AND SER-301</scope>
    <scope>IDENTIFICATION BY MASS SPECTROMETRY [LARGE SCALE ANALYSIS]</scope>
</reference>
<evidence type="ECO:0000250" key="1">
    <source>
        <dbReference type="UniProtKB" id="P00883"/>
    </source>
</evidence>
<evidence type="ECO:0000250" key="2">
    <source>
        <dbReference type="UniProtKB" id="P05062"/>
    </source>
</evidence>
<evidence type="ECO:0000250" key="3">
    <source>
        <dbReference type="UniProtKB" id="Q91Y97"/>
    </source>
</evidence>
<evidence type="ECO:0000305" key="4"/>
<evidence type="ECO:0007744" key="5">
    <source>
    </source>
</evidence>
<keyword id="KW-0007">Acetylation</keyword>
<keyword id="KW-0963">Cytoplasm</keyword>
<keyword id="KW-0206">Cytoskeleton</keyword>
<keyword id="KW-0903">Direct protein sequencing</keyword>
<keyword id="KW-0324">Glycolysis</keyword>
<keyword id="KW-0456">Lyase</keyword>
<keyword id="KW-0597">Phosphoprotein</keyword>
<keyword id="KW-1185">Reference proteome</keyword>
<keyword id="KW-0704">Schiff base</keyword>
<proteinExistence type="evidence at protein level"/>
<gene>
    <name type="primary">Aldob</name>
</gene>